<evidence type="ECO:0000255" key="1">
    <source>
        <dbReference type="HAMAP-Rule" id="MF_00038"/>
    </source>
</evidence>
<name>MRAY_GLOC7</name>
<organism>
    <name type="scientific">Gloeothece citriformis (strain PCC 7424)</name>
    <name type="common">Cyanothece sp. (strain PCC 7424)</name>
    <dbReference type="NCBI Taxonomy" id="65393"/>
    <lineage>
        <taxon>Bacteria</taxon>
        <taxon>Bacillati</taxon>
        <taxon>Cyanobacteriota</taxon>
        <taxon>Cyanophyceae</taxon>
        <taxon>Oscillatoriophycideae</taxon>
        <taxon>Chroococcales</taxon>
        <taxon>Aphanothecaceae</taxon>
        <taxon>Gloeothece</taxon>
        <taxon>Gloeothece citriformis</taxon>
    </lineage>
</organism>
<protein>
    <recommendedName>
        <fullName evidence="1">Phospho-N-acetylmuramoyl-pentapeptide-transferase</fullName>
        <ecNumber evidence="1">2.7.8.13</ecNumber>
    </recommendedName>
    <alternativeName>
        <fullName evidence="1">UDP-MurNAc-pentapeptide phosphotransferase</fullName>
    </alternativeName>
</protein>
<dbReference type="EC" id="2.7.8.13" evidence="1"/>
<dbReference type="EMBL" id="CP001291">
    <property type="protein sequence ID" value="ACK68932.1"/>
    <property type="molecule type" value="Genomic_DNA"/>
</dbReference>
<dbReference type="RefSeq" id="WP_012597879.1">
    <property type="nucleotide sequence ID" value="NC_011729.1"/>
</dbReference>
<dbReference type="SMR" id="B7KDB2"/>
<dbReference type="STRING" id="65393.PCC7424_0466"/>
<dbReference type="KEGG" id="cyc:PCC7424_0466"/>
<dbReference type="eggNOG" id="COG0472">
    <property type="taxonomic scope" value="Bacteria"/>
</dbReference>
<dbReference type="HOGENOM" id="CLU_023982_0_2_3"/>
<dbReference type="OrthoDB" id="9805475at2"/>
<dbReference type="UniPathway" id="UPA00219"/>
<dbReference type="Proteomes" id="UP000002384">
    <property type="component" value="Chromosome"/>
</dbReference>
<dbReference type="GO" id="GO:0005886">
    <property type="term" value="C:plasma membrane"/>
    <property type="evidence" value="ECO:0007669"/>
    <property type="project" value="UniProtKB-SubCell"/>
</dbReference>
<dbReference type="GO" id="GO:0046872">
    <property type="term" value="F:metal ion binding"/>
    <property type="evidence" value="ECO:0007669"/>
    <property type="project" value="UniProtKB-KW"/>
</dbReference>
<dbReference type="GO" id="GO:0008963">
    <property type="term" value="F:phospho-N-acetylmuramoyl-pentapeptide-transferase activity"/>
    <property type="evidence" value="ECO:0007669"/>
    <property type="project" value="UniProtKB-UniRule"/>
</dbReference>
<dbReference type="GO" id="GO:0051992">
    <property type="term" value="F:UDP-N-acetylmuramoyl-L-alanyl-D-glutamyl-meso-2,6-diaminopimelyl-D-alanyl-D-alanine:undecaprenyl-phosphate transferase activity"/>
    <property type="evidence" value="ECO:0007669"/>
    <property type="project" value="RHEA"/>
</dbReference>
<dbReference type="GO" id="GO:0051301">
    <property type="term" value="P:cell division"/>
    <property type="evidence" value="ECO:0007669"/>
    <property type="project" value="UniProtKB-KW"/>
</dbReference>
<dbReference type="GO" id="GO:0071555">
    <property type="term" value="P:cell wall organization"/>
    <property type="evidence" value="ECO:0007669"/>
    <property type="project" value="UniProtKB-KW"/>
</dbReference>
<dbReference type="GO" id="GO:0009252">
    <property type="term" value="P:peptidoglycan biosynthetic process"/>
    <property type="evidence" value="ECO:0007669"/>
    <property type="project" value="UniProtKB-UniRule"/>
</dbReference>
<dbReference type="GO" id="GO:0008360">
    <property type="term" value="P:regulation of cell shape"/>
    <property type="evidence" value="ECO:0007669"/>
    <property type="project" value="UniProtKB-KW"/>
</dbReference>
<dbReference type="CDD" id="cd06852">
    <property type="entry name" value="GT_MraY"/>
    <property type="match status" value="1"/>
</dbReference>
<dbReference type="HAMAP" id="MF_00038">
    <property type="entry name" value="MraY"/>
    <property type="match status" value="1"/>
</dbReference>
<dbReference type="InterPro" id="IPR000715">
    <property type="entry name" value="Glycosyl_transferase_4"/>
</dbReference>
<dbReference type="InterPro" id="IPR003524">
    <property type="entry name" value="PNAcMuramoyl-5peptid_Trfase"/>
</dbReference>
<dbReference type="InterPro" id="IPR018480">
    <property type="entry name" value="PNAcMuramoyl-5peptid_Trfase_CS"/>
</dbReference>
<dbReference type="NCBIfam" id="TIGR00445">
    <property type="entry name" value="mraY"/>
    <property type="match status" value="1"/>
</dbReference>
<dbReference type="PANTHER" id="PTHR22926">
    <property type="entry name" value="PHOSPHO-N-ACETYLMURAMOYL-PENTAPEPTIDE-TRANSFERASE"/>
    <property type="match status" value="1"/>
</dbReference>
<dbReference type="PANTHER" id="PTHR22926:SF5">
    <property type="entry name" value="PHOSPHO-N-ACETYLMURAMOYL-PENTAPEPTIDE-TRANSFERASE HOMOLOG"/>
    <property type="match status" value="1"/>
</dbReference>
<dbReference type="Pfam" id="PF00953">
    <property type="entry name" value="Glycos_transf_4"/>
    <property type="match status" value="1"/>
</dbReference>
<dbReference type="Pfam" id="PF10555">
    <property type="entry name" value="MraY_sig1"/>
    <property type="match status" value="1"/>
</dbReference>
<dbReference type="PROSITE" id="PS01347">
    <property type="entry name" value="MRAY_1"/>
    <property type="match status" value="1"/>
</dbReference>
<dbReference type="PROSITE" id="PS01348">
    <property type="entry name" value="MRAY_2"/>
    <property type="match status" value="1"/>
</dbReference>
<keyword id="KW-0131">Cell cycle</keyword>
<keyword id="KW-0132">Cell division</keyword>
<keyword id="KW-0997">Cell inner membrane</keyword>
<keyword id="KW-1003">Cell membrane</keyword>
<keyword id="KW-0133">Cell shape</keyword>
<keyword id="KW-0961">Cell wall biogenesis/degradation</keyword>
<keyword id="KW-0460">Magnesium</keyword>
<keyword id="KW-0472">Membrane</keyword>
<keyword id="KW-0479">Metal-binding</keyword>
<keyword id="KW-0573">Peptidoglycan synthesis</keyword>
<keyword id="KW-1185">Reference proteome</keyword>
<keyword id="KW-0808">Transferase</keyword>
<keyword id="KW-0812">Transmembrane</keyword>
<keyword id="KW-1133">Transmembrane helix</keyword>
<proteinExistence type="inferred from homology"/>
<accession>B7KDB2</accession>
<comment type="function">
    <text evidence="1">Catalyzes the initial step of the lipid cycle reactions in the biosynthesis of the cell wall peptidoglycan: transfers peptidoglycan precursor phospho-MurNAc-pentapeptide from UDP-MurNAc-pentapeptide onto the lipid carrier undecaprenyl phosphate, yielding undecaprenyl-pyrophosphoryl-MurNAc-pentapeptide, known as lipid I.</text>
</comment>
<comment type="catalytic activity">
    <reaction evidence="1">
        <text>UDP-N-acetyl-alpha-D-muramoyl-L-alanyl-gamma-D-glutamyl-meso-2,6-diaminopimeloyl-D-alanyl-D-alanine + di-trans,octa-cis-undecaprenyl phosphate = di-trans,octa-cis-undecaprenyl diphospho-N-acetyl-alpha-D-muramoyl-L-alanyl-D-glutamyl-meso-2,6-diaminopimeloyl-D-alanyl-D-alanine + UMP</text>
        <dbReference type="Rhea" id="RHEA:28386"/>
        <dbReference type="ChEBI" id="CHEBI:57865"/>
        <dbReference type="ChEBI" id="CHEBI:60392"/>
        <dbReference type="ChEBI" id="CHEBI:61386"/>
        <dbReference type="ChEBI" id="CHEBI:61387"/>
        <dbReference type="EC" id="2.7.8.13"/>
    </reaction>
</comment>
<comment type="cofactor">
    <cofactor evidence="1">
        <name>Mg(2+)</name>
        <dbReference type="ChEBI" id="CHEBI:18420"/>
    </cofactor>
</comment>
<comment type="pathway">
    <text evidence="1">Cell wall biogenesis; peptidoglycan biosynthesis.</text>
</comment>
<comment type="subcellular location">
    <subcellularLocation>
        <location evidence="1">Cell inner membrane</location>
        <topology evidence="1">Multi-pass membrane protein</topology>
    </subcellularLocation>
</comment>
<comment type="similarity">
    <text evidence="1">Belongs to the glycosyltransferase 4 family. MraY subfamily.</text>
</comment>
<reference key="1">
    <citation type="journal article" date="2011" name="MBio">
        <title>Novel metabolic attributes of the genus Cyanothece, comprising a group of unicellular nitrogen-fixing Cyanobacteria.</title>
        <authorList>
            <person name="Bandyopadhyay A."/>
            <person name="Elvitigala T."/>
            <person name="Welsh E."/>
            <person name="Stockel J."/>
            <person name="Liberton M."/>
            <person name="Min H."/>
            <person name="Sherman L.A."/>
            <person name="Pakrasi H.B."/>
        </authorList>
    </citation>
    <scope>NUCLEOTIDE SEQUENCE [LARGE SCALE GENOMIC DNA]</scope>
    <source>
        <strain>PCC 7424</strain>
    </source>
</reference>
<sequence length="365" mass="38764">METKLFSSASLIKPSGTSLLILLTVVLFLLMTLFQWLLTSSLEGIYAVILPVSVSAIACGLLGFGVIPLLRWLKTGQFVREDGPQSHLKKAGTPTMGGIFFIPVAVGVALIGSKFDPQVVAVGIVTLAYMMIGWVDDWQVLRQKSNKGISPKMKLLLQIAVAVLFCLWMLWTGSPNITNLSLPGNLIIPLGWLFWILAIFVLVAESNATNITDGVDGLASGTCAIAFLGLAAIVAPTSVGLMIFCACLSGGCLGFVLHNRNPAKVFMGDTGSLALGGALAAVGLLSGNLWGLFIISGIFFVESLSVIAQVSYYKATKGPDGQGKRLLKMAPLHHHLELSGWSETQIVGVFYLINAGLAILGFISR</sequence>
<feature type="chain" id="PRO_1000116508" description="Phospho-N-acetylmuramoyl-pentapeptide-transferase">
    <location>
        <begin position="1"/>
        <end position="365"/>
    </location>
</feature>
<feature type="transmembrane region" description="Helical" evidence="1">
    <location>
        <begin position="19"/>
        <end position="39"/>
    </location>
</feature>
<feature type="transmembrane region" description="Helical" evidence="1">
    <location>
        <begin position="47"/>
        <end position="67"/>
    </location>
</feature>
<feature type="transmembrane region" description="Helical" evidence="1">
    <location>
        <begin position="91"/>
        <end position="111"/>
    </location>
</feature>
<feature type="transmembrane region" description="Helical" evidence="1">
    <location>
        <begin position="115"/>
        <end position="135"/>
    </location>
</feature>
<feature type="transmembrane region" description="Helical" evidence="1">
    <location>
        <begin position="155"/>
        <end position="175"/>
    </location>
</feature>
<feature type="transmembrane region" description="Helical" evidence="1">
    <location>
        <begin position="184"/>
        <end position="204"/>
    </location>
</feature>
<feature type="transmembrane region" description="Helical" evidence="1">
    <location>
        <begin position="224"/>
        <end position="244"/>
    </location>
</feature>
<feature type="transmembrane region" description="Helical" evidence="1">
    <location>
        <begin position="281"/>
        <end position="301"/>
    </location>
</feature>
<feature type="transmembrane region" description="Helical" evidence="1">
    <location>
        <begin position="344"/>
        <end position="364"/>
    </location>
</feature>
<gene>
    <name evidence="1" type="primary">mraY</name>
    <name type="ordered locus">PCC7424_0466</name>
</gene>